<reference key="1">
    <citation type="submission" date="2008-02" db="EMBL/GenBank/DDBJ databases">
        <title>Complete sequence of Shewanella woodyi ATCC 51908.</title>
        <authorList>
            <consortium name="US DOE Joint Genome Institute"/>
            <person name="Copeland A."/>
            <person name="Lucas S."/>
            <person name="Lapidus A."/>
            <person name="Glavina del Rio T."/>
            <person name="Dalin E."/>
            <person name="Tice H."/>
            <person name="Bruce D."/>
            <person name="Goodwin L."/>
            <person name="Pitluck S."/>
            <person name="Sims D."/>
            <person name="Brettin T."/>
            <person name="Detter J.C."/>
            <person name="Han C."/>
            <person name="Kuske C.R."/>
            <person name="Schmutz J."/>
            <person name="Larimer F."/>
            <person name="Land M."/>
            <person name="Hauser L."/>
            <person name="Kyrpides N."/>
            <person name="Lykidis A."/>
            <person name="Zhao J.-S."/>
            <person name="Richardson P."/>
        </authorList>
    </citation>
    <scope>NUCLEOTIDE SEQUENCE [LARGE SCALE GENOMIC DNA]</scope>
    <source>
        <strain>ATCC 51908 / MS32</strain>
    </source>
</reference>
<keyword id="KW-0378">Hydrolase</keyword>
<keyword id="KW-0479">Metal-binding</keyword>
<keyword id="KW-0665">Pyrimidine biosynthesis</keyword>
<keyword id="KW-1185">Reference proteome</keyword>
<keyword id="KW-0862">Zinc</keyword>
<protein>
    <recommendedName>
        <fullName evidence="1">Dihydroorotase</fullName>
        <shortName evidence="1">DHOase</shortName>
        <ecNumber evidence="1">3.5.2.3</ecNumber>
    </recommendedName>
</protein>
<comment type="function">
    <text evidence="1">Catalyzes the reversible cyclization of carbamoyl aspartate to dihydroorotate.</text>
</comment>
<comment type="catalytic activity">
    <reaction evidence="1">
        <text>(S)-dihydroorotate + H2O = N-carbamoyl-L-aspartate + H(+)</text>
        <dbReference type="Rhea" id="RHEA:24296"/>
        <dbReference type="ChEBI" id="CHEBI:15377"/>
        <dbReference type="ChEBI" id="CHEBI:15378"/>
        <dbReference type="ChEBI" id="CHEBI:30864"/>
        <dbReference type="ChEBI" id="CHEBI:32814"/>
        <dbReference type="EC" id="3.5.2.3"/>
    </reaction>
</comment>
<comment type="cofactor">
    <cofactor evidence="1">
        <name>Zn(2+)</name>
        <dbReference type="ChEBI" id="CHEBI:29105"/>
    </cofactor>
    <text evidence="1">Binds 2 Zn(2+) ions per subunit.</text>
</comment>
<comment type="pathway">
    <text evidence="1">Pyrimidine metabolism; UMP biosynthesis via de novo pathway; (S)-dihydroorotate from bicarbonate: step 3/3.</text>
</comment>
<comment type="subunit">
    <text evidence="1">Homodimer.</text>
</comment>
<comment type="similarity">
    <text evidence="1">Belongs to the metallo-dependent hydrolases superfamily. DHOase family. Class II DHOase subfamily.</text>
</comment>
<dbReference type="EC" id="3.5.2.3" evidence="1"/>
<dbReference type="EMBL" id="CP000961">
    <property type="protein sequence ID" value="ACA88020.1"/>
    <property type="molecule type" value="Genomic_DNA"/>
</dbReference>
<dbReference type="RefSeq" id="WP_012326352.1">
    <property type="nucleotide sequence ID" value="NC_010506.1"/>
</dbReference>
<dbReference type="SMR" id="B1KEK5"/>
<dbReference type="STRING" id="392500.Swoo_3761"/>
<dbReference type="KEGG" id="swd:Swoo_3761"/>
<dbReference type="eggNOG" id="COG0418">
    <property type="taxonomic scope" value="Bacteria"/>
</dbReference>
<dbReference type="HOGENOM" id="CLU_041558_1_0_6"/>
<dbReference type="UniPathway" id="UPA00070">
    <property type="reaction ID" value="UER00117"/>
</dbReference>
<dbReference type="Proteomes" id="UP000002168">
    <property type="component" value="Chromosome"/>
</dbReference>
<dbReference type="GO" id="GO:0005829">
    <property type="term" value="C:cytosol"/>
    <property type="evidence" value="ECO:0007669"/>
    <property type="project" value="TreeGrafter"/>
</dbReference>
<dbReference type="GO" id="GO:0004151">
    <property type="term" value="F:dihydroorotase activity"/>
    <property type="evidence" value="ECO:0007669"/>
    <property type="project" value="UniProtKB-UniRule"/>
</dbReference>
<dbReference type="GO" id="GO:0008270">
    <property type="term" value="F:zinc ion binding"/>
    <property type="evidence" value="ECO:0007669"/>
    <property type="project" value="UniProtKB-UniRule"/>
</dbReference>
<dbReference type="GO" id="GO:0006207">
    <property type="term" value="P:'de novo' pyrimidine nucleobase biosynthetic process"/>
    <property type="evidence" value="ECO:0007669"/>
    <property type="project" value="TreeGrafter"/>
</dbReference>
<dbReference type="GO" id="GO:0044205">
    <property type="term" value="P:'de novo' UMP biosynthetic process"/>
    <property type="evidence" value="ECO:0007669"/>
    <property type="project" value="UniProtKB-UniRule"/>
</dbReference>
<dbReference type="CDD" id="cd01294">
    <property type="entry name" value="DHOase"/>
    <property type="match status" value="1"/>
</dbReference>
<dbReference type="FunFam" id="3.20.20.140:FF:000006">
    <property type="entry name" value="Dihydroorotase"/>
    <property type="match status" value="1"/>
</dbReference>
<dbReference type="Gene3D" id="3.20.20.140">
    <property type="entry name" value="Metal-dependent hydrolases"/>
    <property type="match status" value="1"/>
</dbReference>
<dbReference type="HAMAP" id="MF_00219">
    <property type="entry name" value="PyrC_classII"/>
    <property type="match status" value="1"/>
</dbReference>
<dbReference type="InterPro" id="IPR006680">
    <property type="entry name" value="Amidohydro-rel"/>
</dbReference>
<dbReference type="InterPro" id="IPR004721">
    <property type="entry name" value="DHOdimr"/>
</dbReference>
<dbReference type="InterPro" id="IPR002195">
    <property type="entry name" value="Dihydroorotase_CS"/>
</dbReference>
<dbReference type="InterPro" id="IPR032466">
    <property type="entry name" value="Metal_Hydrolase"/>
</dbReference>
<dbReference type="NCBIfam" id="TIGR00856">
    <property type="entry name" value="pyrC_dimer"/>
    <property type="match status" value="1"/>
</dbReference>
<dbReference type="PANTHER" id="PTHR43137">
    <property type="entry name" value="DIHYDROOROTASE"/>
    <property type="match status" value="1"/>
</dbReference>
<dbReference type="PANTHER" id="PTHR43137:SF1">
    <property type="entry name" value="DIHYDROOROTASE"/>
    <property type="match status" value="1"/>
</dbReference>
<dbReference type="Pfam" id="PF01979">
    <property type="entry name" value="Amidohydro_1"/>
    <property type="match status" value="1"/>
</dbReference>
<dbReference type="PIRSF" id="PIRSF001237">
    <property type="entry name" value="DHOdimr"/>
    <property type="match status" value="1"/>
</dbReference>
<dbReference type="SUPFAM" id="SSF51556">
    <property type="entry name" value="Metallo-dependent hydrolases"/>
    <property type="match status" value="1"/>
</dbReference>
<dbReference type="PROSITE" id="PS00482">
    <property type="entry name" value="DIHYDROOROTASE_1"/>
    <property type="match status" value="1"/>
</dbReference>
<dbReference type="PROSITE" id="PS00483">
    <property type="entry name" value="DIHYDROOROTASE_2"/>
    <property type="match status" value="1"/>
</dbReference>
<sequence length="344" mass="37682">MTQITLLTPDDWHLHFRDGDMLQETVPATARLFQRAIVMPNLLPPVTDAKLASAYRERILAARPEGSSFEPLMTIFLTNDTSKQDIIDAKAAGVVAAKLYPAGATTNSDAAVKGLDALFPIFETMAEIGMLLLVHGEVTESHIDIFDREALFIERNLSRIVDAFPQLKVVFEHITTKEAAEFVTSASDNVAATITPQHLLLNRNDLLVGGVRPHNFCLPVLKRNIHQEALRAAVATGSSKFFLGTDSAPHEKHRKESACGCAGCYSAWSALELYAQVFDDLGVIEKLEGFASTHGPDFYGLPRNTGTVTLVKESWTVPSEIILPNGNPIVPFFAGEEVNWKVKS</sequence>
<gene>
    <name evidence="1" type="primary">pyrC</name>
    <name type="ordered locus">Swoo_3761</name>
</gene>
<organism>
    <name type="scientific">Shewanella woodyi (strain ATCC 51908 / MS32)</name>
    <dbReference type="NCBI Taxonomy" id="392500"/>
    <lineage>
        <taxon>Bacteria</taxon>
        <taxon>Pseudomonadati</taxon>
        <taxon>Pseudomonadota</taxon>
        <taxon>Gammaproteobacteria</taxon>
        <taxon>Alteromonadales</taxon>
        <taxon>Shewanellaceae</taxon>
        <taxon>Shewanella</taxon>
    </lineage>
</organism>
<feature type="chain" id="PRO_1000100063" description="Dihydroorotase">
    <location>
        <begin position="1"/>
        <end position="344"/>
    </location>
</feature>
<feature type="active site" evidence="1">
    <location>
        <position position="246"/>
    </location>
</feature>
<feature type="binding site" evidence="1">
    <location>
        <position position="13"/>
    </location>
    <ligand>
        <name>Zn(2+)</name>
        <dbReference type="ChEBI" id="CHEBI:29105"/>
        <label>1</label>
    </ligand>
</feature>
<feature type="binding site" evidence="1">
    <location>
        <begin position="15"/>
        <end position="17"/>
    </location>
    <ligand>
        <name>substrate</name>
    </ligand>
</feature>
<feature type="binding site" evidence="1">
    <location>
        <position position="15"/>
    </location>
    <ligand>
        <name>Zn(2+)</name>
        <dbReference type="ChEBI" id="CHEBI:29105"/>
        <label>1</label>
    </ligand>
</feature>
<feature type="binding site" evidence="1">
    <location>
        <position position="41"/>
    </location>
    <ligand>
        <name>substrate</name>
    </ligand>
</feature>
<feature type="binding site" description="via carbamate group" evidence="1">
    <location>
        <position position="98"/>
    </location>
    <ligand>
        <name>Zn(2+)</name>
        <dbReference type="ChEBI" id="CHEBI:29105"/>
        <label>1</label>
    </ligand>
</feature>
<feature type="binding site" description="via carbamate group" evidence="1">
    <location>
        <position position="98"/>
    </location>
    <ligand>
        <name>Zn(2+)</name>
        <dbReference type="ChEBI" id="CHEBI:29105"/>
        <label>2</label>
    </ligand>
</feature>
<feature type="binding site" evidence="1">
    <location>
        <position position="135"/>
    </location>
    <ligand>
        <name>substrate</name>
    </ligand>
</feature>
<feature type="binding site" evidence="1">
    <location>
        <position position="135"/>
    </location>
    <ligand>
        <name>Zn(2+)</name>
        <dbReference type="ChEBI" id="CHEBI:29105"/>
        <label>2</label>
    </ligand>
</feature>
<feature type="binding site" evidence="1">
    <location>
        <position position="173"/>
    </location>
    <ligand>
        <name>Zn(2+)</name>
        <dbReference type="ChEBI" id="CHEBI:29105"/>
        <label>2</label>
    </ligand>
</feature>
<feature type="binding site" evidence="1">
    <location>
        <position position="218"/>
    </location>
    <ligand>
        <name>substrate</name>
    </ligand>
</feature>
<feature type="binding site" evidence="1">
    <location>
        <position position="246"/>
    </location>
    <ligand>
        <name>Zn(2+)</name>
        <dbReference type="ChEBI" id="CHEBI:29105"/>
        <label>1</label>
    </ligand>
</feature>
<feature type="binding site" evidence="1">
    <location>
        <position position="250"/>
    </location>
    <ligand>
        <name>substrate</name>
    </ligand>
</feature>
<feature type="binding site" evidence="1">
    <location>
        <position position="262"/>
    </location>
    <ligand>
        <name>substrate</name>
    </ligand>
</feature>
<feature type="modified residue" description="N6-carboxylysine" evidence="1">
    <location>
        <position position="98"/>
    </location>
</feature>
<name>PYRC_SHEWM</name>
<evidence type="ECO:0000255" key="1">
    <source>
        <dbReference type="HAMAP-Rule" id="MF_00219"/>
    </source>
</evidence>
<proteinExistence type="inferred from homology"/>
<accession>B1KEK5</accession>